<comment type="function">
    <text evidence="1">Specifically methylates the uridine in position 2552 of 23S rRNA at the 2'-O position of the ribose in the fully assembled 50S ribosomal subunit.</text>
</comment>
<comment type="catalytic activity">
    <reaction evidence="1">
        <text>uridine(2552) in 23S rRNA + S-adenosyl-L-methionine = 2'-O-methyluridine(2552) in 23S rRNA + S-adenosyl-L-homocysteine + H(+)</text>
        <dbReference type="Rhea" id="RHEA:42720"/>
        <dbReference type="Rhea" id="RHEA-COMP:10202"/>
        <dbReference type="Rhea" id="RHEA-COMP:10203"/>
        <dbReference type="ChEBI" id="CHEBI:15378"/>
        <dbReference type="ChEBI" id="CHEBI:57856"/>
        <dbReference type="ChEBI" id="CHEBI:59789"/>
        <dbReference type="ChEBI" id="CHEBI:65315"/>
        <dbReference type="ChEBI" id="CHEBI:74478"/>
        <dbReference type="EC" id="2.1.1.166"/>
    </reaction>
</comment>
<comment type="subcellular location">
    <subcellularLocation>
        <location evidence="1">Cytoplasm</location>
    </subcellularLocation>
</comment>
<comment type="similarity">
    <text evidence="1">Belongs to the class I-like SAM-binding methyltransferase superfamily. RNA methyltransferase RlmE family.</text>
</comment>
<proteinExistence type="inferred from homology"/>
<name>RLME_XYLFT</name>
<feature type="chain" id="PRO_0000155559" description="Ribosomal RNA large subunit methyltransferase E">
    <location>
        <begin position="1"/>
        <end position="213"/>
    </location>
</feature>
<feature type="active site" description="Proton acceptor" evidence="1">
    <location>
        <position position="161"/>
    </location>
</feature>
<feature type="binding site" evidence="1">
    <location>
        <position position="60"/>
    </location>
    <ligand>
        <name>S-adenosyl-L-methionine</name>
        <dbReference type="ChEBI" id="CHEBI:59789"/>
    </ligand>
</feature>
<feature type="binding site" evidence="1">
    <location>
        <position position="62"/>
    </location>
    <ligand>
        <name>S-adenosyl-L-methionine</name>
        <dbReference type="ChEBI" id="CHEBI:59789"/>
    </ligand>
</feature>
<feature type="binding site" evidence="1">
    <location>
        <position position="80"/>
    </location>
    <ligand>
        <name>S-adenosyl-L-methionine</name>
        <dbReference type="ChEBI" id="CHEBI:59789"/>
    </ligand>
</feature>
<feature type="binding site" evidence="1">
    <location>
        <position position="96"/>
    </location>
    <ligand>
        <name>S-adenosyl-L-methionine</name>
        <dbReference type="ChEBI" id="CHEBI:59789"/>
    </ligand>
</feature>
<feature type="binding site" evidence="1">
    <location>
        <position position="121"/>
    </location>
    <ligand>
        <name>S-adenosyl-L-methionine</name>
        <dbReference type="ChEBI" id="CHEBI:59789"/>
    </ligand>
</feature>
<organism>
    <name type="scientific">Xylella fastidiosa (strain Temecula1 / ATCC 700964)</name>
    <dbReference type="NCBI Taxonomy" id="183190"/>
    <lineage>
        <taxon>Bacteria</taxon>
        <taxon>Pseudomonadati</taxon>
        <taxon>Pseudomonadota</taxon>
        <taxon>Gammaproteobacteria</taxon>
        <taxon>Lysobacterales</taxon>
        <taxon>Lysobacteraceae</taxon>
        <taxon>Xylella</taxon>
    </lineage>
</organism>
<protein>
    <recommendedName>
        <fullName evidence="1">Ribosomal RNA large subunit methyltransferase E</fullName>
        <ecNumber evidence="1">2.1.1.166</ecNumber>
    </recommendedName>
    <alternativeName>
        <fullName evidence="1">23S rRNA Um2552 methyltransferase</fullName>
    </alternativeName>
    <alternativeName>
        <fullName evidence="1">rRNA (uridine-2'-O-)-methyltransferase</fullName>
    </alternativeName>
</protein>
<gene>
    <name evidence="1" type="primary">rlmE</name>
    <name evidence="1" type="synonym">ftsJ</name>
    <name evidence="1" type="synonym">rrmJ</name>
    <name type="ordered locus">PD_0071</name>
</gene>
<reference key="1">
    <citation type="journal article" date="2003" name="J. Bacteriol.">
        <title>Comparative analyses of the complete genome sequences of Pierce's disease and citrus variegated chlorosis strains of Xylella fastidiosa.</title>
        <authorList>
            <person name="Van Sluys M.A."/>
            <person name="de Oliveira M.C."/>
            <person name="Monteiro-Vitorello C.B."/>
            <person name="Miyaki C.Y."/>
            <person name="Furlan L.R."/>
            <person name="Camargo L.E.A."/>
            <person name="da Silva A.C.R."/>
            <person name="Moon D.H."/>
            <person name="Takita M.A."/>
            <person name="Lemos E.G.M."/>
            <person name="Machado M.A."/>
            <person name="Ferro M.I.T."/>
            <person name="da Silva F.R."/>
            <person name="Goldman M.H.S."/>
            <person name="Goldman G.H."/>
            <person name="Lemos M.V.F."/>
            <person name="El-Dorry H."/>
            <person name="Tsai S.M."/>
            <person name="Carrer H."/>
            <person name="Carraro D.M."/>
            <person name="de Oliveira R.C."/>
            <person name="Nunes L.R."/>
            <person name="Siqueira W.J."/>
            <person name="Coutinho L.L."/>
            <person name="Kimura E.T."/>
            <person name="Ferro E.S."/>
            <person name="Harakava R."/>
            <person name="Kuramae E.E."/>
            <person name="Marino C.L."/>
            <person name="Giglioti E."/>
            <person name="Abreu I.L."/>
            <person name="Alves L.M.C."/>
            <person name="do Amaral A.M."/>
            <person name="Baia G.S."/>
            <person name="Blanco S.R."/>
            <person name="Brito M.S."/>
            <person name="Cannavan F.S."/>
            <person name="Celestino A.V."/>
            <person name="da Cunha A.F."/>
            <person name="Fenille R.C."/>
            <person name="Ferro J.A."/>
            <person name="Formighieri E.F."/>
            <person name="Kishi L.T."/>
            <person name="Leoni S.G."/>
            <person name="Oliveira A.R."/>
            <person name="Rosa V.E. Jr."/>
            <person name="Sassaki F.T."/>
            <person name="Sena J.A.D."/>
            <person name="de Souza A.A."/>
            <person name="Truffi D."/>
            <person name="Tsukumo F."/>
            <person name="Yanai G.M."/>
            <person name="Zaros L.G."/>
            <person name="Civerolo E.L."/>
            <person name="Simpson A.J.G."/>
            <person name="Almeida N.F. Jr."/>
            <person name="Setubal J.C."/>
            <person name="Kitajima J.P."/>
        </authorList>
    </citation>
    <scope>NUCLEOTIDE SEQUENCE [LARGE SCALE GENOMIC DNA]</scope>
    <source>
        <strain>Temecula1 / ATCC 700964</strain>
    </source>
</reference>
<accession>Q87F66</accession>
<dbReference type="EC" id="2.1.1.166" evidence="1"/>
<dbReference type="EMBL" id="AE009442">
    <property type="protein sequence ID" value="AAO27971.1"/>
    <property type="molecule type" value="Genomic_DNA"/>
</dbReference>
<dbReference type="RefSeq" id="WP_004087670.1">
    <property type="nucleotide sequence ID" value="NC_004556.1"/>
</dbReference>
<dbReference type="SMR" id="Q87F66"/>
<dbReference type="KEGG" id="xft:PD_0071"/>
<dbReference type="HOGENOM" id="CLU_009422_4_0_6"/>
<dbReference type="Proteomes" id="UP000002516">
    <property type="component" value="Chromosome"/>
</dbReference>
<dbReference type="GO" id="GO:0005737">
    <property type="term" value="C:cytoplasm"/>
    <property type="evidence" value="ECO:0007669"/>
    <property type="project" value="UniProtKB-SubCell"/>
</dbReference>
<dbReference type="GO" id="GO:0008650">
    <property type="term" value="F:rRNA (uridine-2'-O-)-methyltransferase activity"/>
    <property type="evidence" value="ECO:0007669"/>
    <property type="project" value="UniProtKB-UniRule"/>
</dbReference>
<dbReference type="FunFam" id="3.40.50.150:FF:000005">
    <property type="entry name" value="Ribosomal RNA large subunit methyltransferase E"/>
    <property type="match status" value="1"/>
</dbReference>
<dbReference type="Gene3D" id="3.40.50.150">
    <property type="entry name" value="Vaccinia Virus protein VP39"/>
    <property type="match status" value="1"/>
</dbReference>
<dbReference type="HAMAP" id="MF_01547">
    <property type="entry name" value="RNA_methyltr_E"/>
    <property type="match status" value="1"/>
</dbReference>
<dbReference type="InterPro" id="IPR050082">
    <property type="entry name" value="RNA_methyltr_RlmE"/>
</dbReference>
<dbReference type="InterPro" id="IPR002877">
    <property type="entry name" value="RNA_MeTrfase_FtsJ_dom"/>
</dbReference>
<dbReference type="InterPro" id="IPR015507">
    <property type="entry name" value="rRNA-MeTfrase_E"/>
</dbReference>
<dbReference type="InterPro" id="IPR029063">
    <property type="entry name" value="SAM-dependent_MTases_sf"/>
</dbReference>
<dbReference type="PANTHER" id="PTHR10920">
    <property type="entry name" value="RIBOSOMAL RNA METHYLTRANSFERASE"/>
    <property type="match status" value="1"/>
</dbReference>
<dbReference type="PANTHER" id="PTHR10920:SF18">
    <property type="entry name" value="RRNA METHYLTRANSFERASE 2, MITOCHONDRIAL"/>
    <property type="match status" value="1"/>
</dbReference>
<dbReference type="Pfam" id="PF01728">
    <property type="entry name" value="FtsJ"/>
    <property type="match status" value="1"/>
</dbReference>
<dbReference type="PIRSF" id="PIRSF005461">
    <property type="entry name" value="23S_rRNA_mtase"/>
    <property type="match status" value="1"/>
</dbReference>
<dbReference type="SUPFAM" id="SSF53335">
    <property type="entry name" value="S-adenosyl-L-methionine-dependent methyltransferases"/>
    <property type="match status" value="1"/>
</dbReference>
<sequence length="213" mass="23951">MSHSKSSQRWLKEHFSDPFVKKAQAEGMRSRAAYKLEEILKRDRILRPNMVVIDLGAAPGGWSQQIRKQMGDSGRVIALDIVKMAPLVGIEFLQGDFRDKAVLSQLEIMLKGQPVDLVLSDMAPNKSGIDVMDQPRMMYLAELAMDFADIHVKPGGSFLIKLFHGVGSDGYIRQLRHRYKKVAIRKPLASRKRSPEVYILGDGKLTQNEVSCS</sequence>
<keyword id="KW-0963">Cytoplasm</keyword>
<keyword id="KW-0489">Methyltransferase</keyword>
<keyword id="KW-1185">Reference proteome</keyword>
<keyword id="KW-0698">rRNA processing</keyword>
<keyword id="KW-0949">S-adenosyl-L-methionine</keyword>
<keyword id="KW-0808">Transferase</keyword>
<evidence type="ECO:0000255" key="1">
    <source>
        <dbReference type="HAMAP-Rule" id="MF_01547"/>
    </source>
</evidence>